<accession>Q9T154</accession>
<organism>
    <name type="scientific">Listeria phage A118</name>
    <name type="common">Bacteriophage A118</name>
    <dbReference type="NCBI Taxonomy" id="40521"/>
    <lineage>
        <taxon>Viruses</taxon>
        <taxon>Duplodnaviria</taxon>
        <taxon>Heunggongvirae</taxon>
        <taxon>Uroviricota</taxon>
        <taxon>Caudoviricetes</taxon>
    </lineage>
</organism>
<feature type="chain" id="PRO_0000077879" description="Protein Gp66">
    <location>
        <begin position="1"/>
        <end position="144"/>
    </location>
</feature>
<sequence length="144" mass="17066">MGQLFNLPQVEDINYIQTVRAVRQFFKDYLTLRLMAGDRKFPNMTTMYKITPPNFSNEFHSKVEDAAIHNVDNVHAAQEAVKKYDAIMNQLEHIHRKILFEKFIHNLQDRTIMLDIPYEERQYKREKRKAVIELATTLGIEVLN</sequence>
<keyword id="KW-1185">Reference proteome</keyword>
<name>VG66_BPA18</name>
<dbReference type="EMBL" id="AJ242593">
    <property type="protein sequence ID" value="CAB53856.1"/>
    <property type="molecule type" value="Genomic_DNA"/>
</dbReference>
<dbReference type="RefSeq" id="NP_463531.1">
    <property type="nucleotide sequence ID" value="NC_003216.1"/>
</dbReference>
<dbReference type="SMR" id="Q9T154"/>
<dbReference type="GeneID" id="922377"/>
<dbReference type="KEGG" id="vg:922377"/>
<dbReference type="OrthoDB" id="12744at10239"/>
<dbReference type="Proteomes" id="UP000002666">
    <property type="component" value="Genome"/>
</dbReference>
<dbReference type="InterPro" id="IPR006524">
    <property type="entry name" value="ArpU-like"/>
</dbReference>
<dbReference type="NCBIfam" id="TIGR01637">
    <property type="entry name" value="phage_arpU"/>
    <property type="match status" value="1"/>
</dbReference>
<organismHost>
    <name type="scientific">Listeria monocytogenes</name>
    <dbReference type="NCBI Taxonomy" id="1639"/>
</organismHost>
<proteinExistence type="predicted"/>
<protein>
    <recommendedName>
        <fullName>Protein Gp66</fullName>
    </recommendedName>
</protein>
<reference key="1">
    <citation type="journal article" date="2000" name="Mol. Microbiol.">
        <title>Complete nucleotide sequence, molecular analysis and genome structure of bacteriophage A118 of Listeria monocytogenes: implications for phage evolution.</title>
        <authorList>
            <person name="Loessner M.J."/>
            <person name="Inman R.B."/>
            <person name="Lauer P."/>
            <person name="Calendar R."/>
        </authorList>
    </citation>
    <scope>NUCLEOTIDE SEQUENCE [LARGE SCALE GENOMIC DNA]</scope>
</reference>